<comment type="function">
    <text evidence="1">DNA ligase that seals nicks in double-stranded DNA during DNA replication, DNA recombination and DNA repair.</text>
</comment>
<comment type="catalytic activity">
    <reaction evidence="3">
        <text>ATP + (deoxyribonucleotide)n-3'-hydroxyl + 5'-phospho-(deoxyribonucleotide)m = (deoxyribonucleotide)n+m + AMP + diphosphate.</text>
        <dbReference type="EC" id="6.5.1.1"/>
    </reaction>
</comment>
<comment type="cofactor">
    <cofactor evidence="1">
        <name>Mg(2+)</name>
        <dbReference type="ChEBI" id="CHEBI:18420"/>
    </cofactor>
</comment>
<comment type="subcellular location">
    <subcellularLocation>
        <location evidence="1">Nucleus</location>
    </subcellularLocation>
</comment>
<comment type="alternative products">
    <event type="alternative splicing"/>
    <isoform>
        <id>Q27474-1</id>
        <name>a</name>
        <sequence type="displayed"/>
    </isoform>
    <isoform>
        <id>Q27474-2</id>
        <name>b</name>
        <sequence type="described" ref="VSP_013778 VSP_013779"/>
    </isoform>
</comment>
<comment type="similarity">
    <text evidence="5">Belongs to the ATP-dependent DNA ligase family.</text>
</comment>
<proteinExistence type="inferred from homology"/>
<keyword id="KW-0025">Alternative splicing</keyword>
<keyword id="KW-0067">ATP-binding</keyword>
<keyword id="KW-0131">Cell cycle</keyword>
<keyword id="KW-0132">Cell division</keyword>
<keyword id="KW-0227">DNA damage</keyword>
<keyword id="KW-0233">DNA recombination</keyword>
<keyword id="KW-0234">DNA repair</keyword>
<keyword id="KW-0235">DNA replication</keyword>
<keyword id="KW-0436">Ligase</keyword>
<keyword id="KW-0460">Magnesium</keyword>
<keyword id="KW-0479">Metal-binding</keyword>
<keyword id="KW-0547">Nucleotide-binding</keyword>
<keyword id="KW-0539">Nucleus</keyword>
<keyword id="KW-1185">Reference proteome</keyword>
<feature type="chain" id="PRO_0000059583" description="DNA ligase 1">
    <location>
        <begin position="1"/>
        <end position="773"/>
    </location>
</feature>
<feature type="region of interest" description="Interaction with target DNA" evidence="1">
    <location>
        <begin position="180"/>
        <end position="189"/>
    </location>
</feature>
<feature type="region of interest" description="Interaction with target DNA" evidence="1">
    <location>
        <begin position="362"/>
        <end position="364"/>
    </location>
</feature>
<feature type="region of interest" description="Disordered" evidence="4">
    <location>
        <begin position="626"/>
        <end position="773"/>
    </location>
</feature>
<feature type="compositionally biased region" description="Acidic residues" evidence="4">
    <location>
        <begin position="633"/>
        <end position="649"/>
    </location>
</feature>
<feature type="compositionally biased region" description="Basic and acidic residues" evidence="4">
    <location>
        <begin position="658"/>
        <end position="685"/>
    </location>
</feature>
<feature type="compositionally biased region" description="Low complexity" evidence="4">
    <location>
        <begin position="687"/>
        <end position="700"/>
    </location>
</feature>
<feature type="active site" description="N6-AMP-lysine intermediate" evidence="3">
    <location>
        <position position="289"/>
    </location>
</feature>
<feature type="binding site" evidence="2">
    <location>
        <position position="287"/>
    </location>
    <ligand>
        <name>ATP</name>
        <dbReference type="ChEBI" id="CHEBI:30616"/>
    </ligand>
</feature>
<feature type="binding site" evidence="2">
    <location>
        <position position="294"/>
    </location>
    <ligand>
        <name>ATP</name>
        <dbReference type="ChEBI" id="CHEBI:30616"/>
    </ligand>
</feature>
<feature type="binding site" evidence="2">
    <location>
        <position position="342"/>
    </location>
    <ligand>
        <name>ATP</name>
        <dbReference type="ChEBI" id="CHEBI:30616"/>
    </ligand>
</feature>
<feature type="binding site" evidence="1">
    <location>
        <position position="342"/>
    </location>
    <ligand>
        <name>Mg(2+)</name>
        <dbReference type="ChEBI" id="CHEBI:18420"/>
        <label>1</label>
    </ligand>
</feature>
<feature type="binding site" evidence="1">
    <location>
        <position position="439"/>
    </location>
    <ligand>
        <name>Mg(2+)</name>
        <dbReference type="ChEBI" id="CHEBI:18420"/>
        <label>2</label>
    </ligand>
</feature>
<feature type="binding site" evidence="2">
    <location>
        <position position="444"/>
    </location>
    <ligand>
        <name>ATP</name>
        <dbReference type="ChEBI" id="CHEBI:30616"/>
    </ligand>
</feature>
<feature type="binding site" evidence="2">
    <location>
        <position position="463"/>
    </location>
    <ligand>
        <name>ATP</name>
        <dbReference type="ChEBI" id="CHEBI:30616"/>
    </ligand>
</feature>
<feature type="site" description="Interaction with target DNA" evidence="1">
    <location>
        <position position="37"/>
    </location>
</feature>
<feature type="site" description="Interaction with target DNA" evidence="1">
    <location>
        <position position="311"/>
    </location>
</feature>
<feature type="site" description="Interaction with target DNA" evidence="1">
    <location>
        <position position="489"/>
    </location>
</feature>
<feature type="site" description="Interaction with target DNA" evidence="1">
    <location>
        <position position="514"/>
    </location>
</feature>
<feature type="splice variant" id="VSP_013778" description="In isoform b." evidence="5">
    <original>VRG</original>
    <variation>RMP</variation>
    <location>
        <begin position="208"/>
        <end position="210"/>
    </location>
</feature>
<feature type="splice variant" id="VSP_013779" description="In isoform b." evidence="5">
    <location>
        <begin position="211"/>
        <end position="773"/>
    </location>
</feature>
<gene>
    <name type="primary">lig-1</name>
    <name type="ORF">C29A12.3</name>
</gene>
<name>DNLI1_CAEEL</name>
<sequence>MFFSKAGKAAVEWAKGSKVPYKEFALTLEKIEELSGKKKVDELAQFFTKVLDFSPDDLTACVYMSVNQLGPSYEGLELGVAENSLIKAVAKATGRTEGKIKEDLRAKGDLGTVAQQSRSNQKMLAVPKALTVPTVFNKLTEIAKLSGTSAMNKKVDAISALLIACQGIEARFLVRMLAGKMRIGLGEQSVLSALGHAFTLSKITDQKVRGDKLDSLKDANVKRVKTAYCECPNYNRLIEVALTEGVEALVEKCKLSPGIPLKPMLAHPTKGIDEIMRRFRNQTMTCEWKYDGERGQIHKREDGQIFIYSRNQENNTTKYPDIIEKISSCIGDGVTSFIVDAEVVAIDEAGLILPFQVLSTRKRKNATDDNGVKVVVFLFDLLYFNGEPLVRKPLRKRRELLRTNFKKIDGSFYFATSVDTNDTDEINSFFDEAVQNKCEGLMIKTLDTEATYEISRRSHSWLKMKKDYVDGVGDTLDLVVMGAYSGVGKRTGVYGGYLLGCYNPTTEEYESVCKIGTGFTDEDLAEQYKILQDKKIDKSPSYYQFDHTLKPDDTFSPYLVFEVKCADITISPRHKAASGLTDDGKGISLRFPRFLRIRDDKNSDDATSSEQVLEMYKNQEAFANQKIEKADAVDEDDEFEEKEDEEEELNMTNVSEGSSKENPVKEEIKKETPKSVSPKKFEKKPPVKSSPVNKSPVKSSPIKKEAEKKKGPVASIFSSSTKKNEKDVKVESPSPIRKKKLPSDSDESDEETSTNKKQPAKKRSRVAIDSDSD</sequence>
<protein>
    <recommendedName>
        <fullName>DNA ligase 1</fullName>
        <ecNumber evidence="3">6.5.1.1</ecNumber>
    </recommendedName>
    <alternativeName>
        <fullName>DNA ligase I</fullName>
    </alternativeName>
    <alternativeName>
        <fullName>Polydeoxyribonucleotide synthase [ATP] 1</fullName>
    </alternativeName>
</protein>
<evidence type="ECO:0000250" key="1"/>
<evidence type="ECO:0000250" key="2">
    <source>
        <dbReference type="UniProtKB" id="P18858"/>
    </source>
</evidence>
<evidence type="ECO:0000255" key="3">
    <source>
        <dbReference type="PROSITE-ProRule" id="PRU10135"/>
    </source>
</evidence>
<evidence type="ECO:0000256" key="4">
    <source>
        <dbReference type="SAM" id="MobiDB-lite"/>
    </source>
</evidence>
<evidence type="ECO:0000305" key="5"/>
<organism>
    <name type="scientific">Caenorhabditis elegans</name>
    <dbReference type="NCBI Taxonomy" id="6239"/>
    <lineage>
        <taxon>Eukaryota</taxon>
        <taxon>Metazoa</taxon>
        <taxon>Ecdysozoa</taxon>
        <taxon>Nematoda</taxon>
        <taxon>Chromadorea</taxon>
        <taxon>Rhabditida</taxon>
        <taxon>Rhabditina</taxon>
        <taxon>Rhabditomorpha</taxon>
        <taxon>Rhabditoidea</taxon>
        <taxon>Rhabditidae</taxon>
        <taxon>Peloderinae</taxon>
        <taxon>Caenorhabditis</taxon>
    </lineage>
</organism>
<accession>Q27474</accession>
<accession>Q8MQB3</accession>
<dbReference type="EC" id="6.5.1.1" evidence="3"/>
<dbReference type="EMBL" id="Z73970">
    <property type="protein sequence ID" value="CAA98242.2"/>
    <property type="molecule type" value="Genomic_DNA"/>
</dbReference>
<dbReference type="EMBL" id="Z73970">
    <property type="protein sequence ID" value="CAD44112.2"/>
    <property type="molecule type" value="Genomic_DNA"/>
</dbReference>
<dbReference type="PIR" id="T19544">
    <property type="entry name" value="T19544"/>
</dbReference>
<dbReference type="RefSeq" id="NP_741625.2">
    <molecule id="Q27474-1"/>
    <property type="nucleotide sequence ID" value="NM_171537.6"/>
</dbReference>
<dbReference type="RefSeq" id="NP_741626.2">
    <molecule id="Q27474-2"/>
    <property type="nucleotide sequence ID" value="NM_171538.6"/>
</dbReference>
<dbReference type="SMR" id="Q27474"/>
<dbReference type="BioGRID" id="44531">
    <property type="interactions" value="7"/>
</dbReference>
<dbReference type="FunCoup" id="Q27474">
    <property type="interactions" value="2508"/>
</dbReference>
<dbReference type="STRING" id="6239.C29A12.3a.1"/>
<dbReference type="iPTMnet" id="Q27474"/>
<dbReference type="PaxDb" id="6239-C29A12.3a"/>
<dbReference type="PeptideAtlas" id="Q27474"/>
<dbReference type="EnsemblMetazoa" id="C29A12.3a.1">
    <molecule id="Q27474-1"/>
    <property type="protein sequence ID" value="C29A12.3a.1"/>
    <property type="gene ID" value="WBGene00002985"/>
</dbReference>
<dbReference type="EnsemblMetazoa" id="C29A12.3b.1">
    <molecule id="Q27474-2"/>
    <property type="protein sequence ID" value="C29A12.3b.1"/>
    <property type="gene ID" value="WBGene00002985"/>
</dbReference>
<dbReference type="GeneID" id="179502"/>
<dbReference type="KEGG" id="cel:CELE_C29A12.3"/>
<dbReference type="UCSC" id="C29A12.3a">
    <molecule id="Q27474-1"/>
    <property type="organism name" value="c. elegans"/>
</dbReference>
<dbReference type="AGR" id="WB:WBGene00002985"/>
<dbReference type="CTD" id="179502"/>
<dbReference type="WormBase" id="C29A12.3a">
    <molecule id="Q27474-1"/>
    <property type="protein sequence ID" value="CE37480"/>
    <property type="gene ID" value="WBGene00002985"/>
    <property type="gene designation" value="lig-1"/>
</dbReference>
<dbReference type="WormBase" id="C29A12.3b">
    <molecule id="Q27474-2"/>
    <property type="protein sequence ID" value="CE37481"/>
    <property type="gene ID" value="WBGene00002985"/>
    <property type="gene designation" value="lig-1"/>
</dbReference>
<dbReference type="eggNOG" id="KOG0967">
    <property type="taxonomic scope" value="Eukaryota"/>
</dbReference>
<dbReference type="GeneTree" id="ENSGT00940000157783"/>
<dbReference type="HOGENOM" id="CLU_005138_4_1_1"/>
<dbReference type="InParanoid" id="Q27474"/>
<dbReference type="OMA" id="WIKYKRD"/>
<dbReference type="OrthoDB" id="206088at2759"/>
<dbReference type="PhylomeDB" id="Q27474"/>
<dbReference type="Reactome" id="R-CEL-5358565">
    <property type="pathway name" value="Mismatch repair (MMR) directed by MSH2:MSH6 (MutSalpha)"/>
</dbReference>
<dbReference type="Reactome" id="R-CEL-5358606">
    <property type="pathway name" value="Mismatch repair (MMR) directed by MSH2:MSH3 (MutSbeta)"/>
</dbReference>
<dbReference type="Reactome" id="R-CEL-5651801">
    <property type="pathway name" value="PCNA-Dependent Long Patch Base Excision Repair"/>
</dbReference>
<dbReference type="Reactome" id="R-CEL-6782210">
    <property type="pathway name" value="Gap-filling DNA repair synthesis and ligation in TC-NER"/>
</dbReference>
<dbReference type="Reactome" id="R-CEL-69183">
    <property type="pathway name" value="Processive synthesis on the lagging strand"/>
</dbReference>
<dbReference type="PRO" id="PR:Q27474"/>
<dbReference type="Proteomes" id="UP000001940">
    <property type="component" value="Chromosome V"/>
</dbReference>
<dbReference type="Bgee" id="WBGene00002985">
    <property type="expression patterns" value="Expressed in germ line (C elegans) and 4 other cell types or tissues"/>
</dbReference>
<dbReference type="GO" id="GO:0005634">
    <property type="term" value="C:nucleus"/>
    <property type="evidence" value="ECO:0000318"/>
    <property type="project" value="GO_Central"/>
</dbReference>
<dbReference type="GO" id="GO:0005524">
    <property type="term" value="F:ATP binding"/>
    <property type="evidence" value="ECO:0007669"/>
    <property type="project" value="UniProtKB-KW"/>
</dbReference>
<dbReference type="GO" id="GO:0003677">
    <property type="term" value="F:DNA binding"/>
    <property type="evidence" value="ECO:0007669"/>
    <property type="project" value="InterPro"/>
</dbReference>
<dbReference type="GO" id="GO:0003910">
    <property type="term" value="F:DNA ligase (ATP) activity"/>
    <property type="evidence" value="ECO:0000318"/>
    <property type="project" value="GO_Central"/>
</dbReference>
<dbReference type="GO" id="GO:0046872">
    <property type="term" value="F:metal ion binding"/>
    <property type="evidence" value="ECO:0007669"/>
    <property type="project" value="UniProtKB-KW"/>
</dbReference>
<dbReference type="GO" id="GO:0051301">
    <property type="term" value="P:cell division"/>
    <property type="evidence" value="ECO:0007669"/>
    <property type="project" value="UniProtKB-KW"/>
</dbReference>
<dbReference type="GO" id="GO:0071897">
    <property type="term" value="P:DNA biosynthetic process"/>
    <property type="evidence" value="ECO:0007669"/>
    <property type="project" value="InterPro"/>
</dbReference>
<dbReference type="GO" id="GO:0006310">
    <property type="term" value="P:DNA recombination"/>
    <property type="evidence" value="ECO:0007669"/>
    <property type="project" value="UniProtKB-KW"/>
</dbReference>
<dbReference type="GO" id="GO:0006281">
    <property type="term" value="P:DNA repair"/>
    <property type="evidence" value="ECO:0007669"/>
    <property type="project" value="UniProtKB-KW"/>
</dbReference>
<dbReference type="GO" id="GO:0006273">
    <property type="term" value="P:lagging strand elongation"/>
    <property type="evidence" value="ECO:0000318"/>
    <property type="project" value="GO_Central"/>
</dbReference>
<dbReference type="GO" id="GO:1903461">
    <property type="term" value="P:Okazaki fragment processing involved in mitotic DNA replication"/>
    <property type="evidence" value="ECO:0000318"/>
    <property type="project" value="GO_Central"/>
</dbReference>
<dbReference type="CDD" id="cd07900">
    <property type="entry name" value="Adenylation_DNA_ligase_I_Euk"/>
    <property type="match status" value="1"/>
</dbReference>
<dbReference type="CDD" id="cd07969">
    <property type="entry name" value="OBF_DNA_ligase_I"/>
    <property type="match status" value="1"/>
</dbReference>
<dbReference type="FunFam" id="1.10.3260.10:FF:000001">
    <property type="entry name" value="DNA ligase"/>
    <property type="match status" value="1"/>
</dbReference>
<dbReference type="FunFam" id="2.40.50.140:FF:000062">
    <property type="entry name" value="DNA ligase"/>
    <property type="match status" value="1"/>
</dbReference>
<dbReference type="FunFam" id="3.30.470.30:FF:000037">
    <property type="entry name" value="DNA ligase"/>
    <property type="match status" value="1"/>
</dbReference>
<dbReference type="Gene3D" id="3.30.1490.70">
    <property type="match status" value="1"/>
</dbReference>
<dbReference type="Gene3D" id="1.10.3260.10">
    <property type="entry name" value="DNA ligase, ATP-dependent, N-terminal domain"/>
    <property type="match status" value="1"/>
</dbReference>
<dbReference type="Gene3D" id="3.30.470.30">
    <property type="entry name" value="DNA ligase/mRNA capping enzyme"/>
    <property type="match status" value="1"/>
</dbReference>
<dbReference type="Gene3D" id="2.40.50.140">
    <property type="entry name" value="Nucleic acid-binding proteins"/>
    <property type="match status" value="1"/>
</dbReference>
<dbReference type="InterPro" id="IPR050191">
    <property type="entry name" value="ATP-dep_DNA_ligase"/>
</dbReference>
<dbReference type="InterPro" id="IPR000977">
    <property type="entry name" value="DNA_ligase_ATP-dep"/>
</dbReference>
<dbReference type="InterPro" id="IPR012309">
    <property type="entry name" value="DNA_ligase_ATP-dep_C"/>
</dbReference>
<dbReference type="InterPro" id="IPR012310">
    <property type="entry name" value="DNA_ligase_ATP-dep_cent"/>
</dbReference>
<dbReference type="InterPro" id="IPR016059">
    <property type="entry name" value="DNA_ligase_ATP-dep_CS"/>
</dbReference>
<dbReference type="InterPro" id="IPR012308">
    <property type="entry name" value="DNA_ligase_ATP-dep_N"/>
</dbReference>
<dbReference type="InterPro" id="IPR036599">
    <property type="entry name" value="DNA_ligase_N_sf"/>
</dbReference>
<dbReference type="InterPro" id="IPR012340">
    <property type="entry name" value="NA-bd_OB-fold"/>
</dbReference>
<dbReference type="NCBIfam" id="TIGR00574">
    <property type="entry name" value="dnl1"/>
    <property type="match status" value="1"/>
</dbReference>
<dbReference type="PANTHER" id="PTHR45674:SF4">
    <property type="entry name" value="DNA LIGASE 1"/>
    <property type="match status" value="1"/>
</dbReference>
<dbReference type="PANTHER" id="PTHR45674">
    <property type="entry name" value="DNA LIGASE 1/3 FAMILY MEMBER"/>
    <property type="match status" value="1"/>
</dbReference>
<dbReference type="Pfam" id="PF04679">
    <property type="entry name" value="DNA_ligase_A_C"/>
    <property type="match status" value="1"/>
</dbReference>
<dbReference type="Pfam" id="PF01068">
    <property type="entry name" value="DNA_ligase_A_M"/>
    <property type="match status" value="1"/>
</dbReference>
<dbReference type="Pfam" id="PF04675">
    <property type="entry name" value="DNA_ligase_A_N"/>
    <property type="match status" value="1"/>
</dbReference>
<dbReference type="SUPFAM" id="SSF117018">
    <property type="entry name" value="ATP-dependent DNA ligase DNA-binding domain"/>
    <property type="match status" value="1"/>
</dbReference>
<dbReference type="SUPFAM" id="SSF56091">
    <property type="entry name" value="DNA ligase/mRNA capping enzyme, catalytic domain"/>
    <property type="match status" value="1"/>
</dbReference>
<dbReference type="SUPFAM" id="SSF50249">
    <property type="entry name" value="Nucleic acid-binding proteins"/>
    <property type="match status" value="1"/>
</dbReference>
<dbReference type="PROSITE" id="PS00697">
    <property type="entry name" value="DNA_LIGASE_A1"/>
    <property type="match status" value="1"/>
</dbReference>
<dbReference type="PROSITE" id="PS00333">
    <property type="entry name" value="DNA_LIGASE_A2"/>
    <property type="match status" value="1"/>
</dbReference>
<dbReference type="PROSITE" id="PS50160">
    <property type="entry name" value="DNA_LIGASE_A3"/>
    <property type="match status" value="1"/>
</dbReference>
<reference key="1">
    <citation type="journal article" date="1998" name="Science">
        <title>Genome sequence of the nematode C. elegans: a platform for investigating biology.</title>
        <authorList>
            <consortium name="The C. elegans sequencing consortium"/>
        </authorList>
    </citation>
    <scope>NUCLEOTIDE SEQUENCE [LARGE SCALE GENOMIC DNA]</scope>
    <scope>ALTERNATIVE SPLICING</scope>
    <source>
        <strain>Bristol N2</strain>
    </source>
</reference>